<comment type="function">
    <text evidence="1">Catalyzes the formation of 5-methyl-uridine at position 1939 (m5U1939) in 23S rRNA.</text>
</comment>
<comment type="catalytic activity">
    <reaction evidence="1">
        <text>uridine(1939) in 23S rRNA + S-adenosyl-L-methionine = 5-methyluridine(1939) in 23S rRNA + S-adenosyl-L-homocysteine + H(+)</text>
        <dbReference type="Rhea" id="RHEA:42908"/>
        <dbReference type="Rhea" id="RHEA-COMP:10278"/>
        <dbReference type="Rhea" id="RHEA-COMP:10279"/>
        <dbReference type="ChEBI" id="CHEBI:15378"/>
        <dbReference type="ChEBI" id="CHEBI:57856"/>
        <dbReference type="ChEBI" id="CHEBI:59789"/>
        <dbReference type="ChEBI" id="CHEBI:65315"/>
        <dbReference type="ChEBI" id="CHEBI:74447"/>
        <dbReference type="EC" id="2.1.1.190"/>
    </reaction>
</comment>
<comment type="similarity">
    <text evidence="1">Belongs to the class I-like SAM-binding methyltransferase superfamily. RNA M5U methyltransferase family. RlmD subfamily.</text>
</comment>
<evidence type="ECO:0000255" key="1">
    <source>
        <dbReference type="HAMAP-Rule" id="MF_01010"/>
    </source>
</evidence>
<evidence type="ECO:0000256" key="2">
    <source>
        <dbReference type="SAM" id="MobiDB-lite"/>
    </source>
</evidence>
<dbReference type="EC" id="2.1.1.190" evidence="1"/>
<dbReference type="EMBL" id="CP001103">
    <property type="protein sequence ID" value="AEA96956.1"/>
    <property type="molecule type" value="Genomic_DNA"/>
</dbReference>
<dbReference type="RefSeq" id="WP_012517310.1">
    <property type="nucleotide sequence ID" value="NC_011138.3"/>
</dbReference>
<dbReference type="SMR" id="F2GA29"/>
<dbReference type="KEGG" id="amc:MADE_1004040"/>
<dbReference type="HOGENOM" id="CLU_014689_8_2_6"/>
<dbReference type="Proteomes" id="UP000001870">
    <property type="component" value="Chromosome"/>
</dbReference>
<dbReference type="GO" id="GO:0051539">
    <property type="term" value="F:4 iron, 4 sulfur cluster binding"/>
    <property type="evidence" value="ECO:0007669"/>
    <property type="project" value="UniProtKB-KW"/>
</dbReference>
<dbReference type="GO" id="GO:0005506">
    <property type="term" value="F:iron ion binding"/>
    <property type="evidence" value="ECO:0007669"/>
    <property type="project" value="UniProtKB-UniRule"/>
</dbReference>
<dbReference type="GO" id="GO:0003723">
    <property type="term" value="F:RNA binding"/>
    <property type="evidence" value="ECO:0007669"/>
    <property type="project" value="InterPro"/>
</dbReference>
<dbReference type="GO" id="GO:0070041">
    <property type="term" value="F:rRNA (uridine-C5-)-methyltransferase activity"/>
    <property type="evidence" value="ECO:0007669"/>
    <property type="project" value="UniProtKB-UniRule"/>
</dbReference>
<dbReference type="GO" id="GO:0070475">
    <property type="term" value="P:rRNA base methylation"/>
    <property type="evidence" value="ECO:0007669"/>
    <property type="project" value="TreeGrafter"/>
</dbReference>
<dbReference type="CDD" id="cd02440">
    <property type="entry name" value="AdoMet_MTases"/>
    <property type="match status" value="1"/>
</dbReference>
<dbReference type="Gene3D" id="2.40.50.1070">
    <property type="match status" value="1"/>
</dbReference>
<dbReference type="Gene3D" id="2.40.50.140">
    <property type="entry name" value="Nucleic acid-binding proteins"/>
    <property type="match status" value="1"/>
</dbReference>
<dbReference type="Gene3D" id="3.40.50.150">
    <property type="entry name" value="Vaccinia Virus protein VP39"/>
    <property type="match status" value="1"/>
</dbReference>
<dbReference type="HAMAP" id="MF_01010">
    <property type="entry name" value="23SrRNA_methyltr_RlmD"/>
    <property type="match status" value="1"/>
</dbReference>
<dbReference type="InterPro" id="IPR001566">
    <property type="entry name" value="23S_rRNA_MeTrfase_RlmD"/>
</dbReference>
<dbReference type="InterPro" id="IPR030390">
    <property type="entry name" value="MeTrfase_TrmA_AS"/>
</dbReference>
<dbReference type="InterPro" id="IPR012340">
    <property type="entry name" value="NA-bd_OB-fold"/>
</dbReference>
<dbReference type="InterPro" id="IPR029063">
    <property type="entry name" value="SAM-dependent_MTases_sf"/>
</dbReference>
<dbReference type="InterPro" id="IPR002792">
    <property type="entry name" value="TRAM_dom"/>
</dbReference>
<dbReference type="InterPro" id="IPR010280">
    <property type="entry name" value="U5_MeTrfase_fam"/>
</dbReference>
<dbReference type="NCBIfam" id="TIGR00479">
    <property type="entry name" value="rumA"/>
    <property type="match status" value="1"/>
</dbReference>
<dbReference type="PANTHER" id="PTHR11061:SF49">
    <property type="entry name" value="23S RRNA (URACIL(1939)-C(5))-METHYLTRANSFERASE RLMD"/>
    <property type="match status" value="1"/>
</dbReference>
<dbReference type="PANTHER" id="PTHR11061">
    <property type="entry name" value="RNA M5U METHYLTRANSFERASE"/>
    <property type="match status" value="1"/>
</dbReference>
<dbReference type="Pfam" id="PF05958">
    <property type="entry name" value="tRNA_U5-meth_tr"/>
    <property type="match status" value="1"/>
</dbReference>
<dbReference type="SUPFAM" id="SSF50249">
    <property type="entry name" value="Nucleic acid-binding proteins"/>
    <property type="match status" value="1"/>
</dbReference>
<dbReference type="SUPFAM" id="SSF53335">
    <property type="entry name" value="S-adenosyl-L-methionine-dependent methyltransferases"/>
    <property type="match status" value="1"/>
</dbReference>
<dbReference type="PROSITE" id="PS51687">
    <property type="entry name" value="SAM_MT_RNA_M5U"/>
    <property type="match status" value="1"/>
</dbReference>
<dbReference type="PROSITE" id="PS50926">
    <property type="entry name" value="TRAM"/>
    <property type="match status" value="1"/>
</dbReference>
<dbReference type="PROSITE" id="PS01230">
    <property type="entry name" value="TRMA_1"/>
    <property type="match status" value="1"/>
</dbReference>
<proteinExistence type="inferred from homology"/>
<name>RLMD_ALTMD</name>
<reference key="1">
    <citation type="journal article" date="2008" name="ISME J.">
        <title>Comparative genomics of two ecotypes of the marine planktonic copiotroph Alteromonas macleodii suggests alternative lifestyles associated with different kinds of particulate organic matter.</title>
        <authorList>
            <person name="Ivars-Martinez E."/>
            <person name="Martin-Cuadrado A.-B."/>
            <person name="D'Auria G."/>
            <person name="Mira A."/>
            <person name="Ferriera S."/>
            <person name="Johnson J."/>
            <person name="Friedman R."/>
            <person name="Rodriguez-Valera F."/>
        </authorList>
    </citation>
    <scope>NUCLEOTIDE SEQUENCE [LARGE SCALE GENOMIC DNA]</scope>
    <source>
        <strain>DSM 17117 / CIP 110805 / LMG 28347 / Deep ecotype</strain>
    </source>
</reference>
<accession>F2GA29</accession>
<keyword id="KW-0004">4Fe-4S</keyword>
<keyword id="KW-0408">Iron</keyword>
<keyword id="KW-0411">Iron-sulfur</keyword>
<keyword id="KW-0479">Metal-binding</keyword>
<keyword id="KW-0489">Methyltransferase</keyword>
<keyword id="KW-0698">rRNA processing</keyword>
<keyword id="KW-0949">S-adenosyl-L-methionine</keyword>
<keyword id="KW-0808">Transferase</keyword>
<feature type="chain" id="PRO_0000414797" description="23S rRNA (uracil(1939)-C(5))-methyltransferase RlmD">
    <location>
        <begin position="1"/>
        <end position="482"/>
    </location>
</feature>
<feature type="domain" description="TRAM" evidence="1">
    <location>
        <begin position="51"/>
        <end position="108"/>
    </location>
</feature>
<feature type="region of interest" description="Disordered" evidence="2">
    <location>
        <begin position="1"/>
        <end position="33"/>
    </location>
</feature>
<feature type="compositionally biased region" description="Low complexity" evidence="2">
    <location>
        <begin position="15"/>
        <end position="28"/>
    </location>
</feature>
<feature type="active site" description="Nucleophile" evidence="1">
    <location>
        <position position="437"/>
    </location>
</feature>
<feature type="binding site" evidence="1">
    <location>
        <position position="121"/>
    </location>
    <ligand>
        <name>[4Fe-4S] cluster</name>
        <dbReference type="ChEBI" id="CHEBI:49883"/>
    </ligand>
</feature>
<feature type="binding site" evidence="1">
    <location>
        <position position="127"/>
    </location>
    <ligand>
        <name>[4Fe-4S] cluster</name>
        <dbReference type="ChEBI" id="CHEBI:49883"/>
    </ligand>
</feature>
<feature type="binding site" evidence="1">
    <location>
        <position position="130"/>
    </location>
    <ligand>
        <name>[4Fe-4S] cluster</name>
        <dbReference type="ChEBI" id="CHEBI:49883"/>
    </ligand>
</feature>
<feature type="binding site" evidence="1">
    <location>
        <position position="208"/>
    </location>
    <ligand>
        <name>[4Fe-4S] cluster</name>
        <dbReference type="ChEBI" id="CHEBI:49883"/>
    </ligand>
</feature>
<feature type="binding site" evidence="1">
    <location>
        <position position="313"/>
    </location>
    <ligand>
        <name>S-adenosyl-L-methionine</name>
        <dbReference type="ChEBI" id="CHEBI:59789"/>
    </ligand>
</feature>
<feature type="binding site" evidence="1">
    <location>
        <position position="342"/>
    </location>
    <ligand>
        <name>S-adenosyl-L-methionine</name>
        <dbReference type="ChEBI" id="CHEBI:59789"/>
    </ligand>
</feature>
<feature type="binding site" evidence="1">
    <location>
        <position position="347"/>
    </location>
    <ligand>
        <name>S-adenosyl-L-methionine</name>
        <dbReference type="ChEBI" id="CHEBI:59789"/>
    </ligand>
</feature>
<feature type="binding site" evidence="1">
    <location>
        <position position="363"/>
    </location>
    <ligand>
        <name>S-adenosyl-L-methionine</name>
        <dbReference type="ChEBI" id="CHEBI:59789"/>
    </ligand>
</feature>
<feature type="binding site" evidence="1">
    <location>
        <position position="390"/>
    </location>
    <ligand>
        <name>S-adenosyl-L-methionine</name>
        <dbReference type="ChEBI" id="CHEBI:59789"/>
    </ligand>
</feature>
<feature type="binding site" evidence="1">
    <location>
        <position position="411"/>
    </location>
    <ligand>
        <name>S-adenosyl-L-methionine</name>
        <dbReference type="ChEBI" id="CHEBI:59789"/>
    </ligand>
</feature>
<protein>
    <recommendedName>
        <fullName evidence="1">23S rRNA (uracil(1939)-C(5))-methyltransferase RlmD</fullName>
        <ecNumber evidence="1">2.1.1.190</ecNumber>
    </recommendedName>
    <alternativeName>
        <fullName evidence="1">23S rRNA(m5U1939)-methyltransferase</fullName>
    </alternativeName>
</protein>
<gene>
    <name evidence="1" type="primary">rlmD</name>
    <name type="ordered locus">MADE_1004040</name>
</gene>
<sequence>MANLFKQSRAKQKNKTTPSQTQTSTKGSARANAQVAGLRFKKSKQSKEHNTAQDANNNAITIQELDWMGQGVARGATMYFVEGALPGETCDIEVVSSKKKVVSAKTISIQGPSELRQPPFCPVFEACGGCQLQHIDADAALAYRDNALKIMMERQLSIGSGVWQAPLVGPRPQYRRKARLAIDARNPDNIKLGFREANSNKVVNLDTCPILVNPLSTAIGPLRNALEGYDSARHIGHISLIAGDNRAQVVIKHTKALEDALIETVDAFAKALGLDVVLENKQGRLRSVGEAQGLIMHTVDGCSISPSANDFIQINKVVNEKMINQALVWLDPRPNERIADWFSGLGNFTLPIAKKGALVQAIEGVAEMVLRAKDNAQQQGIENVEWLHLDLANKANVEASLQQGFDKVLLDPSREGALTVCHALVKALPKTIVYVSCNPSTFSRDAKVLINGGYEMEKAGVAEMFPFTHHMEMMALFTQRQQ</sequence>
<organism>
    <name type="scientific">Alteromonas mediterranea (strain DSM 17117 / CIP 110805 / LMG 28347 / Deep ecotype)</name>
    <dbReference type="NCBI Taxonomy" id="1774373"/>
    <lineage>
        <taxon>Bacteria</taxon>
        <taxon>Pseudomonadati</taxon>
        <taxon>Pseudomonadota</taxon>
        <taxon>Gammaproteobacteria</taxon>
        <taxon>Alteromonadales</taxon>
        <taxon>Alteromonadaceae</taxon>
        <taxon>Alteromonas/Salinimonas group</taxon>
        <taxon>Alteromonas</taxon>
    </lineage>
</organism>